<evidence type="ECO:0000255" key="1">
    <source>
        <dbReference type="HAMAP-Rule" id="MF_00203"/>
    </source>
</evidence>
<reference key="1">
    <citation type="journal article" date="2009" name="Nat. Genet.">
        <title>Comparative genomic and phylogeographic analysis of Mycobacterium leprae.</title>
        <authorList>
            <person name="Monot M."/>
            <person name="Honore N."/>
            <person name="Garnier T."/>
            <person name="Zidane N."/>
            <person name="Sherafi D."/>
            <person name="Paniz-Mondolfi A."/>
            <person name="Matsuoka M."/>
            <person name="Taylor G.M."/>
            <person name="Donoghue H.D."/>
            <person name="Bouwman A."/>
            <person name="Mays S."/>
            <person name="Watson C."/>
            <person name="Lockwood D."/>
            <person name="Khamispour A."/>
            <person name="Dowlati Y."/>
            <person name="Jianping S."/>
            <person name="Rea T.H."/>
            <person name="Vera-Cabrera L."/>
            <person name="Stefani M.M."/>
            <person name="Banu S."/>
            <person name="Macdonald M."/>
            <person name="Sapkota B.R."/>
            <person name="Spencer J.S."/>
            <person name="Thomas J."/>
            <person name="Harshman K."/>
            <person name="Singh P."/>
            <person name="Busso P."/>
            <person name="Gattiker A."/>
            <person name="Rougemont J."/>
            <person name="Brennan P.J."/>
            <person name="Cole S.T."/>
        </authorList>
    </citation>
    <scope>NUCLEOTIDE SEQUENCE [LARGE SCALE GENOMIC DNA]</scope>
    <source>
        <strain>Br4923</strain>
    </source>
</reference>
<protein>
    <recommendedName>
        <fullName evidence="1">UvrABC system protein C</fullName>
        <shortName evidence="1">Protein UvrC</shortName>
    </recommendedName>
    <alternativeName>
        <fullName evidence="1">Excinuclease ABC subunit C</fullName>
    </alternativeName>
</protein>
<sequence length="647" mass="72386">MPDPATYRPATGSIPVEPGVYRFRDPYGRVIYVGKAKSLRSRLASYFADVANLHPRTRQMVTIAAKVEWTVVNTEVEALQLEYNWIKEFDPRFNIRYRDDKSYPVLAVTLGEEFPRLMVYRGPRRKGVRYFGPYSHAWAIRETLDLLTRVFPARTCSPGVFKRHKQIDRPCLLGYIDKCAAPCVGRVGAEQHSQIVADFCDFLSGKTDRYARDLERKMSAAAEQLDFERAARLRDDLFALKRAMEKQAVVFGDGTDADVVAFAYDELEVAVQVFHVRGGRVRGQRGWIVEKSDDPGDTGEEQLVEQFLAQFYGEQAELDFVADESANPVPREVLVPCLPSNADELASWLSGLRGSRVALRVPRRGDKRALAETVQRNAKEELQQHKLKRASDFNSRSAALQNIQDTLGLSYAPLRIECVDISHVQGTDVVGSLVVFEDGLPRKSDYRHFGIRKAAGNGRSDDVASIAEVTRRRFLQHLHDQNDTNLLSPEGKSHRFAYPPNLYVVDGGAPQVNAASTVLEELGIIDVAVIGLAKRLEEVWVPFEPYPVIMPRNSEALFLLQRVRDEAHRFAITYHRSKRSKRMTASALDSVPGLGAHRRKALVTHFGSIARLKDATVEQITAVPGIGVATATAVLEALRPDSSEASE</sequence>
<dbReference type="EMBL" id="FM211192">
    <property type="protein sequence ID" value="CAR70655.1"/>
    <property type="molecule type" value="Genomic_DNA"/>
</dbReference>
<dbReference type="SMR" id="B8ZUN5"/>
<dbReference type="KEGG" id="mlb:MLBr00562"/>
<dbReference type="HOGENOM" id="CLU_014841_1_1_11"/>
<dbReference type="Proteomes" id="UP000006900">
    <property type="component" value="Chromosome"/>
</dbReference>
<dbReference type="GO" id="GO:0005737">
    <property type="term" value="C:cytoplasm"/>
    <property type="evidence" value="ECO:0007669"/>
    <property type="project" value="UniProtKB-SubCell"/>
</dbReference>
<dbReference type="GO" id="GO:0009380">
    <property type="term" value="C:excinuclease repair complex"/>
    <property type="evidence" value="ECO:0007669"/>
    <property type="project" value="InterPro"/>
</dbReference>
<dbReference type="GO" id="GO:0003677">
    <property type="term" value="F:DNA binding"/>
    <property type="evidence" value="ECO:0007669"/>
    <property type="project" value="UniProtKB-UniRule"/>
</dbReference>
<dbReference type="GO" id="GO:0009381">
    <property type="term" value="F:excinuclease ABC activity"/>
    <property type="evidence" value="ECO:0007669"/>
    <property type="project" value="UniProtKB-UniRule"/>
</dbReference>
<dbReference type="GO" id="GO:0006289">
    <property type="term" value="P:nucleotide-excision repair"/>
    <property type="evidence" value="ECO:0007669"/>
    <property type="project" value="UniProtKB-UniRule"/>
</dbReference>
<dbReference type="GO" id="GO:0009432">
    <property type="term" value="P:SOS response"/>
    <property type="evidence" value="ECO:0007669"/>
    <property type="project" value="UniProtKB-UniRule"/>
</dbReference>
<dbReference type="CDD" id="cd10434">
    <property type="entry name" value="GIY-YIG_UvrC_Cho"/>
    <property type="match status" value="1"/>
</dbReference>
<dbReference type="FunFam" id="3.30.420.340:FF:000003">
    <property type="entry name" value="UvrABC system protein C"/>
    <property type="match status" value="1"/>
</dbReference>
<dbReference type="FunFam" id="3.40.1440.10:FF:000001">
    <property type="entry name" value="UvrABC system protein C"/>
    <property type="match status" value="1"/>
</dbReference>
<dbReference type="Gene3D" id="1.10.150.20">
    <property type="entry name" value="5' to 3' exonuclease, C-terminal subdomain"/>
    <property type="match status" value="1"/>
</dbReference>
<dbReference type="Gene3D" id="3.40.1440.10">
    <property type="entry name" value="GIY-YIG endonuclease"/>
    <property type="match status" value="1"/>
</dbReference>
<dbReference type="Gene3D" id="4.10.860.10">
    <property type="entry name" value="UVR domain"/>
    <property type="match status" value="1"/>
</dbReference>
<dbReference type="Gene3D" id="3.30.420.340">
    <property type="entry name" value="UvrC, RNAse H endonuclease domain"/>
    <property type="match status" value="1"/>
</dbReference>
<dbReference type="HAMAP" id="MF_00203">
    <property type="entry name" value="UvrC"/>
    <property type="match status" value="1"/>
</dbReference>
<dbReference type="InterPro" id="IPR000305">
    <property type="entry name" value="GIY-YIG_endonuc"/>
</dbReference>
<dbReference type="InterPro" id="IPR035901">
    <property type="entry name" value="GIY-YIG_endonuc_sf"/>
</dbReference>
<dbReference type="InterPro" id="IPR047296">
    <property type="entry name" value="GIY-YIG_UvrC_Cho"/>
</dbReference>
<dbReference type="InterPro" id="IPR003583">
    <property type="entry name" value="Hlx-hairpin-Hlx_DNA-bd_motif"/>
</dbReference>
<dbReference type="InterPro" id="IPR010994">
    <property type="entry name" value="RuvA_2-like"/>
</dbReference>
<dbReference type="InterPro" id="IPR001943">
    <property type="entry name" value="UVR_dom"/>
</dbReference>
<dbReference type="InterPro" id="IPR036876">
    <property type="entry name" value="UVR_dom_sf"/>
</dbReference>
<dbReference type="InterPro" id="IPR050066">
    <property type="entry name" value="UvrABC_protein_C"/>
</dbReference>
<dbReference type="InterPro" id="IPR004791">
    <property type="entry name" value="UvrC"/>
</dbReference>
<dbReference type="InterPro" id="IPR001162">
    <property type="entry name" value="UvrC_RNase_H_dom"/>
</dbReference>
<dbReference type="InterPro" id="IPR038476">
    <property type="entry name" value="UvrC_RNase_H_dom_sf"/>
</dbReference>
<dbReference type="NCBIfam" id="NF001824">
    <property type="entry name" value="PRK00558.1-5"/>
    <property type="match status" value="1"/>
</dbReference>
<dbReference type="NCBIfam" id="TIGR00194">
    <property type="entry name" value="uvrC"/>
    <property type="match status" value="1"/>
</dbReference>
<dbReference type="PANTHER" id="PTHR30562:SF1">
    <property type="entry name" value="UVRABC SYSTEM PROTEIN C"/>
    <property type="match status" value="1"/>
</dbReference>
<dbReference type="PANTHER" id="PTHR30562">
    <property type="entry name" value="UVRC/OXIDOREDUCTASE"/>
    <property type="match status" value="1"/>
</dbReference>
<dbReference type="Pfam" id="PF01541">
    <property type="entry name" value="GIY-YIG"/>
    <property type="match status" value="1"/>
</dbReference>
<dbReference type="Pfam" id="PF14520">
    <property type="entry name" value="HHH_5"/>
    <property type="match status" value="1"/>
</dbReference>
<dbReference type="Pfam" id="PF02151">
    <property type="entry name" value="UVR"/>
    <property type="match status" value="1"/>
</dbReference>
<dbReference type="Pfam" id="PF22920">
    <property type="entry name" value="UvrC_RNaseH"/>
    <property type="match status" value="1"/>
</dbReference>
<dbReference type="Pfam" id="PF08459">
    <property type="entry name" value="UvrC_RNaseH_dom"/>
    <property type="match status" value="1"/>
</dbReference>
<dbReference type="SMART" id="SM00465">
    <property type="entry name" value="GIYc"/>
    <property type="match status" value="1"/>
</dbReference>
<dbReference type="SMART" id="SM00278">
    <property type="entry name" value="HhH1"/>
    <property type="match status" value="2"/>
</dbReference>
<dbReference type="SUPFAM" id="SSF46600">
    <property type="entry name" value="C-terminal UvrC-binding domain of UvrB"/>
    <property type="match status" value="1"/>
</dbReference>
<dbReference type="SUPFAM" id="SSF82771">
    <property type="entry name" value="GIY-YIG endonuclease"/>
    <property type="match status" value="1"/>
</dbReference>
<dbReference type="SUPFAM" id="SSF47781">
    <property type="entry name" value="RuvA domain 2-like"/>
    <property type="match status" value="1"/>
</dbReference>
<dbReference type="PROSITE" id="PS50164">
    <property type="entry name" value="GIY_YIG"/>
    <property type="match status" value="1"/>
</dbReference>
<dbReference type="PROSITE" id="PS50151">
    <property type="entry name" value="UVR"/>
    <property type="match status" value="1"/>
</dbReference>
<dbReference type="PROSITE" id="PS50165">
    <property type="entry name" value="UVRC"/>
    <property type="match status" value="1"/>
</dbReference>
<name>UVRC_MYCLB</name>
<comment type="function">
    <text evidence="1">The UvrABC repair system catalyzes the recognition and processing of DNA lesions. UvrC both incises the 5' and 3' sides of the lesion. The N-terminal half is responsible for the 3' incision and the C-terminal half is responsible for the 5' incision.</text>
</comment>
<comment type="subunit">
    <text evidence="1">Interacts with UvrB in an incision complex.</text>
</comment>
<comment type="subcellular location">
    <subcellularLocation>
        <location evidence="1">Cytoplasm</location>
    </subcellularLocation>
</comment>
<comment type="similarity">
    <text evidence="1">Belongs to the UvrC family.</text>
</comment>
<proteinExistence type="inferred from homology"/>
<feature type="chain" id="PRO_1000200594" description="UvrABC system protein C">
    <location>
        <begin position="1"/>
        <end position="647"/>
    </location>
</feature>
<feature type="domain" description="GIY-YIG" evidence="1">
    <location>
        <begin position="16"/>
        <end position="95"/>
    </location>
</feature>
<feature type="domain" description="UVR" evidence="1">
    <location>
        <begin position="208"/>
        <end position="243"/>
    </location>
</feature>
<keyword id="KW-0963">Cytoplasm</keyword>
<keyword id="KW-0227">DNA damage</keyword>
<keyword id="KW-0228">DNA excision</keyword>
<keyword id="KW-0234">DNA repair</keyword>
<keyword id="KW-0267">Excision nuclease</keyword>
<keyword id="KW-0742">SOS response</keyword>
<accession>B8ZUN5</accession>
<organism>
    <name type="scientific">Mycobacterium leprae (strain Br4923)</name>
    <dbReference type="NCBI Taxonomy" id="561304"/>
    <lineage>
        <taxon>Bacteria</taxon>
        <taxon>Bacillati</taxon>
        <taxon>Actinomycetota</taxon>
        <taxon>Actinomycetes</taxon>
        <taxon>Mycobacteriales</taxon>
        <taxon>Mycobacteriaceae</taxon>
        <taxon>Mycobacterium</taxon>
    </lineage>
</organism>
<gene>
    <name evidence="1" type="primary">uvrC</name>
    <name type="ordered locus">MLBr00562</name>
</gene>